<reference key="1">
    <citation type="journal article" date="1997" name="Gene">
        <title>Cloning and sequence of the cDNA encoding the beta 4 integrin subunit in rat peripheral nerve.</title>
        <authorList>
            <person name="Feltri M.L."/>
            <person name="Arona M."/>
            <person name="Scherer S.S."/>
            <person name="Wrabetz L."/>
        </authorList>
    </citation>
    <scope>NUCLEOTIDE SEQUENCE [MRNA]</scope>
    <source>
        <strain>Sprague-Dawley</strain>
        <tissue>Sciatic nerve</tissue>
    </source>
</reference>
<reference key="2">
    <citation type="journal article" date="2012" name="Nat. Commun.">
        <title>Quantitative maps of protein phosphorylation sites across 14 different rat organs and tissues.</title>
        <authorList>
            <person name="Lundby A."/>
            <person name="Secher A."/>
            <person name="Lage K."/>
            <person name="Nordsborg N.B."/>
            <person name="Dmytriyev A."/>
            <person name="Lundby C."/>
            <person name="Olsen J.V."/>
        </authorList>
    </citation>
    <scope>PHOSPHORYLATION [LARGE SCALE ANALYSIS] AT SER-773; SER-1071; SER-1121; SER-1386; SER-1389; SER-1425 AND SER-1776</scope>
    <scope>IDENTIFICATION BY MASS SPECTROMETRY [LARGE SCALE ANALYSIS]</scope>
</reference>
<gene>
    <name type="primary">Itgb4</name>
</gene>
<protein>
    <recommendedName>
        <fullName>Integrin beta-4</fullName>
    </recommendedName>
    <alternativeName>
        <fullName>GP150</fullName>
    </alternativeName>
    <cdAntigenName>CD104</cdAntigenName>
</protein>
<dbReference type="EMBL" id="U60096">
    <property type="protein sequence ID" value="AAC53094.1"/>
    <property type="molecule type" value="mRNA"/>
</dbReference>
<dbReference type="PIR" id="JC6319">
    <property type="entry name" value="JC6319"/>
</dbReference>
<dbReference type="RefSeq" id="NP_037312.1">
    <property type="nucleotide sequence ID" value="NM_013180.1"/>
</dbReference>
<dbReference type="PDB" id="6HYF">
    <property type="method" value="X-ray"/>
    <property type="resolution" value="1.60 A"/>
    <property type="chains" value="A/B/C/D=1512-1602"/>
</dbReference>
<dbReference type="PDBsum" id="6HYF"/>
<dbReference type="SMR" id="Q64632"/>
<dbReference type="FunCoup" id="Q64632">
    <property type="interactions" value="542"/>
</dbReference>
<dbReference type="STRING" id="10116.ENSRNOP00000073188"/>
<dbReference type="GlyCosmos" id="Q64632">
    <property type="glycosylation" value="5 sites, No reported glycans"/>
</dbReference>
<dbReference type="GlyGen" id="Q64632">
    <property type="glycosylation" value="5 sites"/>
</dbReference>
<dbReference type="iPTMnet" id="Q64632"/>
<dbReference type="PhosphoSitePlus" id="Q64632"/>
<dbReference type="SwissPalm" id="Q64632"/>
<dbReference type="PaxDb" id="10116-ENSRNOP00000059783"/>
<dbReference type="GeneID" id="25724"/>
<dbReference type="KEGG" id="rno:25724"/>
<dbReference type="AGR" id="RGD:2928"/>
<dbReference type="CTD" id="3691"/>
<dbReference type="RGD" id="2928">
    <property type="gene designation" value="Itgb4"/>
</dbReference>
<dbReference type="eggNOG" id="KOG1226">
    <property type="taxonomic scope" value="Eukaryota"/>
</dbReference>
<dbReference type="InParanoid" id="Q64632"/>
<dbReference type="PhylomeDB" id="Q64632"/>
<dbReference type="Reactome" id="R-RNO-3000157">
    <property type="pathway name" value="Laminin interactions"/>
</dbReference>
<dbReference type="Reactome" id="R-RNO-3000170">
    <property type="pathway name" value="Syndecan interactions"/>
</dbReference>
<dbReference type="Reactome" id="R-RNO-446107">
    <property type="pathway name" value="Type I hemidesmosome assembly"/>
</dbReference>
<dbReference type="PRO" id="PR:Q64632"/>
<dbReference type="Proteomes" id="UP000002494">
    <property type="component" value="Unplaced"/>
</dbReference>
<dbReference type="GO" id="GO:0009925">
    <property type="term" value="C:basal plasma membrane"/>
    <property type="evidence" value="ECO:0000266"/>
    <property type="project" value="RGD"/>
</dbReference>
<dbReference type="GO" id="GO:0005604">
    <property type="term" value="C:basement membrane"/>
    <property type="evidence" value="ECO:0000266"/>
    <property type="project" value="RGD"/>
</dbReference>
<dbReference type="GO" id="GO:0005938">
    <property type="term" value="C:cell cortex"/>
    <property type="evidence" value="ECO:0000314"/>
    <property type="project" value="RGD"/>
</dbReference>
<dbReference type="GO" id="GO:0031252">
    <property type="term" value="C:cell leading edge"/>
    <property type="evidence" value="ECO:0000250"/>
    <property type="project" value="UniProtKB"/>
</dbReference>
<dbReference type="GO" id="GO:0009986">
    <property type="term" value="C:cell surface"/>
    <property type="evidence" value="ECO:0000266"/>
    <property type="project" value="RGD"/>
</dbReference>
<dbReference type="GO" id="GO:0005615">
    <property type="term" value="C:extracellular space"/>
    <property type="evidence" value="ECO:0000304"/>
    <property type="project" value="RGD"/>
</dbReference>
<dbReference type="GO" id="GO:0005925">
    <property type="term" value="C:focal adhesion"/>
    <property type="evidence" value="ECO:0000318"/>
    <property type="project" value="GO_Central"/>
</dbReference>
<dbReference type="GO" id="GO:0098978">
    <property type="term" value="C:glutamatergic synapse"/>
    <property type="evidence" value="ECO:0000314"/>
    <property type="project" value="SynGO"/>
</dbReference>
<dbReference type="GO" id="GO:0030056">
    <property type="term" value="C:hemidesmosome"/>
    <property type="evidence" value="ECO:0000266"/>
    <property type="project" value="RGD"/>
</dbReference>
<dbReference type="GO" id="GO:0008305">
    <property type="term" value="C:integrin complex"/>
    <property type="evidence" value="ECO:0000266"/>
    <property type="project" value="RGD"/>
</dbReference>
<dbReference type="GO" id="GO:0005886">
    <property type="term" value="C:plasma membrane"/>
    <property type="evidence" value="ECO:0000266"/>
    <property type="project" value="RGD"/>
</dbReference>
<dbReference type="GO" id="GO:0045211">
    <property type="term" value="C:postsynaptic membrane"/>
    <property type="evidence" value="ECO:0000314"/>
    <property type="project" value="SynGO"/>
</dbReference>
<dbReference type="GO" id="GO:0043235">
    <property type="term" value="C:receptor complex"/>
    <property type="evidence" value="ECO:0000266"/>
    <property type="project" value="RGD"/>
</dbReference>
<dbReference type="GO" id="GO:0050839">
    <property type="term" value="F:cell adhesion molecule binding"/>
    <property type="evidence" value="ECO:0000304"/>
    <property type="project" value="RGD"/>
</dbReference>
<dbReference type="GO" id="GO:0001664">
    <property type="term" value="F:G protein-coupled receptor binding"/>
    <property type="evidence" value="ECO:0000266"/>
    <property type="project" value="RGD"/>
</dbReference>
<dbReference type="GO" id="GO:0005178">
    <property type="term" value="F:integrin binding"/>
    <property type="evidence" value="ECO:0000318"/>
    <property type="project" value="GO_Central"/>
</dbReference>
<dbReference type="GO" id="GO:0046872">
    <property type="term" value="F:metal ion binding"/>
    <property type="evidence" value="ECO:0007669"/>
    <property type="project" value="UniProtKB-KW"/>
</dbReference>
<dbReference type="GO" id="GO:0006914">
    <property type="term" value="P:autophagy"/>
    <property type="evidence" value="ECO:0000266"/>
    <property type="project" value="RGD"/>
</dbReference>
<dbReference type="GO" id="GO:0007155">
    <property type="term" value="P:cell adhesion"/>
    <property type="evidence" value="ECO:0000266"/>
    <property type="project" value="RGD"/>
</dbReference>
<dbReference type="GO" id="GO:0033627">
    <property type="term" value="P:cell adhesion mediated by integrin"/>
    <property type="evidence" value="ECO:0000318"/>
    <property type="project" value="GO_Central"/>
</dbReference>
<dbReference type="GO" id="GO:0016477">
    <property type="term" value="P:cell migration"/>
    <property type="evidence" value="ECO:0000318"/>
    <property type="project" value="GO_Central"/>
</dbReference>
<dbReference type="GO" id="GO:0048870">
    <property type="term" value="P:cell motility"/>
    <property type="evidence" value="ECO:0000250"/>
    <property type="project" value="UniProtKB"/>
</dbReference>
<dbReference type="GO" id="GO:0098609">
    <property type="term" value="P:cell-cell adhesion"/>
    <property type="evidence" value="ECO:0000318"/>
    <property type="project" value="GO_Central"/>
</dbReference>
<dbReference type="GO" id="GO:0007160">
    <property type="term" value="P:cell-matrix adhesion"/>
    <property type="evidence" value="ECO:0000266"/>
    <property type="project" value="RGD"/>
</dbReference>
<dbReference type="GO" id="GO:0046847">
    <property type="term" value="P:filopodium assembly"/>
    <property type="evidence" value="ECO:0000266"/>
    <property type="project" value="RGD"/>
</dbReference>
<dbReference type="GO" id="GO:0031581">
    <property type="term" value="P:hemidesmosome assembly"/>
    <property type="evidence" value="ECO:0000266"/>
    <property type="project" value="RGD"/>
</dbReference>
<dbReference type="GO" id="GO:0007229">
    <property type="term" value="P:integrin-mediated signaling pathway"/>
    <property type="evidence" value="ECO:0000318"/>
    <property type="project" value="GO_Central"/>
</dbReference>
<dbReference type="GO" id="GO:0048333">
    <property type="term" value="P:mesodermal cell differentiation"/>
    <property type="evidence" value="ECO:0000266"/>
    <property type="project" value="RGD"/>
</dbReference>
<dbReference type="GO" id="GO:0022011">
    <property type="term" value="P:myelination in peripheral nervous system"/>
    <property type="evidence" value="ECO:0000266"/>
    <property type="project" value="RGD"/>
</dbReference>
<dbReference type="GO" id="GO:0035878">
    <property type="term" value="P:nail development"/>
    <property type="evidence" value="ECO:0000266"/>
    <property type="project" value="RGD"/>
</dbReference>
<dbReference type="GO" id="GO:0032290">
    <property type="term" value="P:peripheral nervous system myelin formation"/>
    <property type="evidence" value="ECO:0000266"/>
    <property type="project" value="RGD"/>
</dbReference>
<dbReference type="GO" id="GO:0009611">
    <property type="term" value="P:response to wounding"/>
    <property type="evidence" value="ECO:0000250"/>
    <property type="project" value="UniProtKB"/>
</dbReference>
<dbReference type="GO" id="GO:0043589">
    <property type="term" value="P:skin morphogenesis"/>
    <property type="evidence" value="ECO:0000266"/>
    <property type="project" value="RGD"/>
</dbReference>
<dbReference type="GO" id="GO:0061450">
    <property type="term" value="P:trophoblast cell migration"/>
    <property type="evidence" value="ECO:0000266"/>
    <property type="project" value="RGD"/>
</dbReference>
<dbReference type="CDD" id="cd00063">
    <property type="entry name" value="FN3"/>
    <property type="match status" value="4"/>
</dbReference>
<dbReference type="FunFam" id="2.10.25.10:FF:000212">
    <property type="entry name" value="Integrin beta"/>
    <property type="match status" value="1"/>
</dbReference>
<dbReference type="FunFam" id="2.10.25.10:FF:000215">
    <property type="entry name" value="Integrin beta"/>
    <property type="match status" value="1"/>
</dbReference>
<dbReference type="FunFam" id="2.10.25.10:FF:000287">
    <property type="entry name" value="Integrin beta"/>
    <property type="match status" value="1"/>
</dbReference>
<dbReference type="FunFam" id="2.60.40.10:FF:000146">
    <property type="entry name" value="Integrin beta"/>
    <property type="match status" value="2"/>
</dbReference>
<dbReference type="FunFam" id="2.60.40.10:FF:000424">
    <property type="entry name" value="Integrin beta"/>
    <property type="match status" value="1"/>
</dbReference>
<dbReference type="FunFam" id="2.60.40.10:FF:000452">
    <property type="entry name" value="Integrin beta"/>
    <property type="match status" value="1"/>
</dbReference>
<dbReference type="FunFam" id="2.60.40.1510:FF:000006">
    <property type="entry name" value="Integrin beta"/>
    <property type="match status" value="1"/>
</dbReference>
<dbReference type="FunFam" id="2.60.40.2030:FF:000004">
    <property type="entry name" value="Integrin beta"/>
    <property type="match status" value="1"/>
</dbReference>
<dbReference type="FunFam" id="3.30.1680.10:FF:000002">
    <property type="entry name" value="Integrin beta"/>
    <property type="match status" value="1"/>
</dbReference>
<dbReference type="FunFam" id="3.40.50.410:FF:000036">
    <property type="entry name" value="Integrin beta"/>
    <property type="match status" value="1"/>
</dbReference>
<dbReference type="FunFam" id="4.10.1240.30:FF:000003">
    <property type="entry name" value="Integrin beta"/>
    <property type="match status" value="1"/>
</dbReference>
<dbReference type="Gene3D" id="2.60.40.2030">
    <property type="match status" value="1"/>
</dbReference>
<dbReference type="Gene3D" id="4.10.1240.30">
    <property type="match status" value="1"/>
</dbReference>
<dbReference type="Gene3D" id="2.60.40.10">
    <property type="entry name" value="Immunoglobulins"/>
    <property type="match status" value="4"/>
</dbReference>
<dbReference type="Gene3D" id="2.10.25.10">
    <property type="entry name" value="Laminin"/>
    <property type="match status" value="3"/>
</dbReference>
<dbReference type="Gene3D" id="3.30.1680.10">
    <property type="entry name" value="ligand-binding face of the semaphorins, domain 2"/>
    <property type="match status" value="1"/>
</dbReference>
<dbReference type="Gene3D" id="2.60.40.1510">
    <property type="entry name" value="ntegrin, alpha v. Chain A, domain 3"/>
    <property type="match status" value="1"/>
</dbReference>
<dbReference type="Gene3D" id="3.40.50.410">
    <property type="entry name" value="von Willebrand factor, type A domain"/>
    <property type="match status" value="1"/>
</dbReference>
<dbReference type="InterPro" id="IPR038081">
    <property type="entry name" value="CalX-like_sf"/>
</dbReference>
<dbReference type="InterPro" id="IPR003644">
    <property type="entry name" value="Calx_beta"/>
</dbReference>
<dbReference type="InterPro" id="IPR000742">
    <property type="entry name" value="EGF-like_dom"/>
</dbReference>
<dbReference type="InterPro" id="IPR003961">
    <property type="entry name" value="FN3_dom"/>
</dbReference>
<dbReference type="InterPro" id="IPR036116">
    <property type="entry name" value="FN3_sf"/>
</dbReference>
<dbReference type="InterPro" id="IPR040622">
    <property type="entry name" value="I-EGF_1"/>
</dbReference>
<dbReference type="InterPro" id="IPR013783">
    <property type="entry name" value="Ig-like_fold"/>
</dbReference>
<dbReference type="InterPro" id="IPR033760">
    <property type="entry name" value="Integrin_beta_N"/>
</dbReference>
<dbReference type="InterPro" id="IPR015812">
    <property type="entry name" value="Integrin_bsu"/>
</dbReference>
<dbReference type="InterPro" id="IPR012013">
    <property type="entry name" value="Integrin_bsu-4"/>
</dbReference>
<dbReference type="InterPro" id="IPR012896">
    <property type="entry name" value="Integrin_bsu_tail"/>
</dbReference>
<dbReference type="InterPro" id="IPR036349">
    <property type="entry name" value="Integrin_bsu_tail_dom_sf"/>
</dbReference>
<dbReference type="InterPro" id="IPR002369">
    <property type="entry name" value="Integrin_bsu_VWA"/>
</dbReference>
<dbReference type="InterPro" id="IPR036465">
    <property type="entry name" value="vWFA_dom_sf"/>
</dbReference>
<dbReference type="PANTHER" id="PTHR10082">
    <property type="entry name" value="INTEGRIN BETA SUBUNIT"/>
    <property type="match status" value="1"/>
</dbReference>
<dbReference type="PANTHER" id="PTHR10082:SF42">
    <property type="entry name" value="INTEGRIN BETA-4"/>
    <property type="match status" value="1"/>
</dbReference>
<dbReference type="Pfam" id="PF03160">
    <property type="entry name" value="Calx-beta"/>
    <property type="match status" value="1"/>
</dbReference>
<dbReference type="Pfam" id="PF23106">
    <property type="entry name" value="EGF_Teneurin"/>
    <property type="match status" value="1"/>
</dbReference>
<dbReference type="Pfam" id="PF00041">
    <property type="entry name" value="fn3"/>
    <property type="match status" value="4"/>
</dbReference>
<dbReference type="Pfam" id="PF18372">
    <property type="entry name" value="I-EGF_1"/>
    <property type="match status" value="1"/>
</dbReference>
<dbReference type="Pfam" id="PF07965">
    <property type="entry name" value="Integrin_B_tail"/>
    <property type="match status" value="1"/>
</dbReference>
<dbReference type="Pfam" id="PF00362">
    <property type="entry name" value="Integrin_beta"/>
    <property type="match status" value="1"/>
</dbReference>
<dbReference type="Pfam" id="PF17205">
    <property type="entry name" value="PSI_integrin"/>
    <property type="match status" value="1"/>
</dbReference>
<dbReference type="PIRSF" id="PIRSF002513">
    <property type="entry name" value="Integrin_B4"/>
    <property type="match status" value="1"/>
</dbReference>
<dbReference type="PRINTS" id="PR01186">
    <property type="entry name" value="INTEGRINB"/>
</dbReference>
<dbReference type="SMART" id="SM00237">
    <property type="entry name" value="Calx_beta"/>
    <property type="match status" value="1"/>
</dbReference>
<dbReference type="SMART" id="SM00060">
    <property type="entry name" value="FN3"/>
    <property type="match status" value="4"/>
</dbReference>
<dbReference type="SMART" id="SM00187">
    <property type="entry name" value="INB"/>
    <property type="match status" value="1"/>
</dbReference>
<dbReference type="SMART" id="SM01242">
    <property type="entry name" value="Integrin_B_tail"/>
    <property type="match status" value="1"/>
</dbReference>
<dbReference type="SUPFAM" id="SSF141072">
    <property type="entry name" value="CalX-like"/>
    <property type="match status" value="1"/>
</dbReference>
<dbReference type="SUPFAM" id="SSF57196">
    <property type="entry name" value="EGF/Laminin"/>
    <property type="match status" value="1"/>
</dbReference>
<dbReference type="SUPFAM" id="SSF49265">
    <property type="entry name" value="Fibronectin type III"/>
    <property type="match status" value="2"/>
</dbReference>
<dbReference type="SUPFAM" id="SSF69687">
    <property type="entry name" value="Integrin beta tail domain"/>
    <property type="match status" value="1"/>
</dbReference>
<dbReference type="SUPFAM" id="SSF103575">
    <property type="entry name" value="Plexin repeat"/>
    <property type="match status" value="1"/>
</dbReference>
<dbReference type="SUPFAM" id="SSF53300">
    <property type="entry name" value="vWA-like"/>
    <property type="match status" value="1"/>
</dbReference>
<dbReference type="PROSITE" id="PS00022">
    <property type="entry name" value="EGF_1"/>
    <property type="match status" value="2"/>
</dbReference>
<dbReference type="PROSITE" id="PS01186">
    <property type="entry name" value="EGF_2"/>
    <property type="match status" value="2"/>
</dbReference>
<dbReference type="PROSITE" id="PS50853">
    <property type="entry name" value="FN3"/>
    <property type="match status" value="4"/>
</dbReference>
<dbReference type="PROSITE" id="PS00243">
    <property type="entry name" value="I_EGF_1"/>
    <property type="match status" value="2"/>
</dbReference>
<dbReference type="PROSITE" id="PS52047">
    <property type="entry name" value="I_EGF_2"/>
    <property type="match status" value="4"/>
</dbReference>
<feature type="signal peptide" evidence="1">
    <location>
        <begin position="1"/>
        <end position="27"/>
    </location>
</feature>
<feature type="chain" id="PRO_0000016347" description="Integrin beta-4">
    <location>
        <begin position="28"/>
        <end position="1807"/>
    </location>
</feature>
<feature type="topological domain" description="Extracellular" evidence="4">
    <location>
        <begin position="28"/>
        <end position="713"/>
    </location>
</feature>
<feature type="transmembrane region" description="Helical" evidence="4">
    <location>
        <begin position="714"/>
        <end position="734"/>
    </location>
</feature>
<feature type="topological domain" description="Cytoplasmic" evidence="4">
    <location>
        <begin position="735"/>
        <end position="1807"/>
    </location>
</feature>
<feature type="domain" description="PSI" evidence="4">
    <location>
        <begin position="29"/>
        <end position="73"/>
    </location>
</feature>
<feature type="domain" description="VWFA" evidence="2">
    <location>
        <begin position="131"/>
        <end position="340"/>
    </location>
</feature>
<feature type="domain" description="I-EGF 1" evidence="6">
    <location>
        <begin position="458"/>
        <end position="492"/>
    </location>
</feature>
<feature type="domain" description="I-EGF 2" evidence="6">
    <location>
        <begin position="493"/>
        <end position="538"/>
    </location>
</feature>
<feature type="domain" description="I-EGF 3" evidence="6">
    <location>
        <begin position="539"/>
        <end position="575"/>
    </location>
</feature>
<feature type="domain" description="I-EGF 4" evidence="6">
    <location>
        <begin position="576"/>
        <end position="617"/>
    </location>
</feature>
<feature type="domain" description="Calx-beta">
    <location>
        <begin position="981"/>
        <end position="1086"/>
    </location>
</feature>
<feature type="domain" description="Fibronectin type-III 1" evidence="5">
    <location>
        <begin position="1131"/>
        <end position="1220"/>
    </location>
</feature>
<feature type="domain" description="Fibronectin type-III 2" evidence="5">
    <location>
        <begin position="1224"/>
        <end position="1323"/>
    </location>
</feature>
<feature type="domain" description="Fibronectin type-III 3" evidence="5">
    <location>
        <begin position="1514"/>
        <end position="1609"/>
    </location>
</feature>
<feature type="domain" description="Fibronectin type-III 4" evidence="5">
    <location>
        <begin position="1627"/>
        <end position="1723"/>
    </location>
</feature>
<feature type="region of interest" description="Involved in NRG1- and IGF1-binding" evidence="3">
    <location>
        <begin position="194"/>
        <end position="199"/>
    </location>
</feature>
<feature type="region of interest" description="Palmitoylated on several cysteines" evidence="1">
    <location>
        <begin position="734"/>
        <end position="751"/>
    </location>
</feature>
<feature type="region of interest" description="Disordered" evidence="7">
    <location>
        <begin position="1119"/>
        <end position="1141"/>
    </location>
</feature>
<feature type="binding site" description="in MIDAS binding site" evidence="2">
    <location>
        <position position="139"/>
    </location>
    <ligand>
        <name>Mg(2+)</name>
        <dbReference type="ChEBI" id="CHEBI:18420"/>
    </ligand>
</feature>
<feature type="binding site" description="in ADMIDAS binding site" evidence="2">
    <location>
        <position position="141"/>
    </location>
    <ligand>
        <name>Ca(2+)</name>
        <dbReference type="ChEBI" id="CHEBI:29108"/>
        <label>1</label>
    </ligand>
</feature>
<feature type="binding site" description="in MIDAS binding site" evidence="2">
    <location>
        <position position="141"/>
    </location>
    <ligand>
        <name>Mg(2+)</name>
        <dbReference type="ChEBI" id="CHEBI:18420"/>
    </ligand>
</feature>
<feature type="binding site" description="in ADMIDAS binding site" evidence="2">
    <location>
        <position position="144"/>
    </location>
    <ligand>
        <name>Ca(2+)</name>
        <dbReference type="ChEBI" id="CHEBI:29108"/>
        <label>1</label>
    </ligand>
</feature>
<feature type="binding site" description="in ADMIDAS binding site" evidence="2">
    <location>
        <position position="145"/>
    </location>
    <ligand>
        <name>Ca(2+)</name>
        <dbReference type="ChEBI" id="CHEBI:29108"/>
        <label>1</label>
    </ligand>
</feature>
<feature type="binding site" description="in LIMBS binding site" evidence="2">
    <location>
        <position position="176"/>
    </location>
    <ligand>
        <name>Ca(2+)</name>
        <dbReference type="ChEBI" id="CHEBI:29108"/>
        <label>2</label>
    </ligand>
</feature>
<feature type="binding site" description="in LIMBS binding site" evidence="2">
    <location>
        <position position="228"/>
    </location>
    <ligand>
        <name>Ca(2+)</name>
        <dbReference type="ChEBI" id="CHEBI:29108"/>
        <label>2</label>
    </ligand>
</feature>
<feature type="binding site" description="in LIMBS binding site" evidence="2">
    <location>
        <position position="230"/>
    </location>
    <ligand>
        <name>Ca(2+)</name>
        <dbReference type="ChEBI" id="CHEBI:29108"/>
        <label>2</label>
    </ligand>
</feature>
<feature type="binding site" description="in LIMBS binding site" evidence="2">
    <location>
        <position position="232"/>
    </location>
    <ligand>
        <name>Ca(2+)</name>
        <dbReference type="ChEBI" id="CHEBI:29108"/>
        <label>2</label>
    </ligand>
</feature>
<feature type="binding site" description="in LIMBS binding site" evidence="2">
    <location>
        <position position="233"/>
    </location>
    <ligand>
        <name>Ca(2+)</name>
        <dbReference type="ChEBI" id="CHEBI:29108"/>
        <label>2</label>
    </ligand>
</feature>
<feature type="binding site" description="in MIDAS binding site" evidence="2">
    <location>
        <position position="233"/>
    </location>
    <ligand>
        <name>Mg(2+)</name>
        <dbReference type="ChEBI" id="CHEBI:18420"/>
    </ligand>
</feature>
<feature type="binding site" description="in ADMIDAS binding site" evidence="2">
    <location>
        <position position="350"/>
    </location>
    <ligand>
        <name>Ca(2+)</name>
        <dbReference type="ChEBI" id="CHEBI:29108"/>
        <label>1</label>
    </ligand>
</feature>
<feature type="modified residue" description="Phosphoserine" evidence="9">
    <location>
        <position position="773"/>
    </location>
</feature>
<feature type="modified residue" description="Phosphoserine" evidence="9">
    <location>
        <position position="1071"/>
    </location>
</feature>
<feature type="modified residue" description="Phosphoserine" evidence="9">
    <location>
        <position position="1121"/>
    </location>
</feature>
<feature type="modified residue" description="Phosphoserine" evidence="9">
    <location>
        <position position="1386"/>
    </location>
</feature>
<feature type="modified residue" description="Phosphoserine" evidence="9">
    <location>
        <position position="1389"/>
    </location>
</feature>
<feature type="modified residue" description="Phosphoserine" evidence="3">
    <location>
        <position position="1405"/>
    </location>
</feature>
<feature type="modified residue" description="Phosphothreonine" evidence="3">
    <location>
        <position position="1418"/>
    </location>
</feature>
<feature type="modified residue" description="Phosphoserine" evidence="9">
    <location>
        <position position="1425"/>
    </location>
</feature>
<feature type="modified residue" description="Phosphothreonine" evidence="3">
    <location>
        <position position="1514"/>
    </location>
</feature>
<feature type="modified residue" description="Phosphoserine" evidence="9">
    <location>
        <position position="1776"/>
    </location>
</feature>
<feature type="glycosylation site" description="N-linked (GlcNAc...) asparagine" evidence="4">
    <location>
        <position position="327"/>
    </location>
</feature>
<feature type="glycosylation site" description="N-linked (GlcNAc...) asparagine" evidence="4">
    <location>
        <position position="492"/>
    </location>
</feature>
<feature type="glycosylation site" description="N-linked (GlcNAc...) asparagine" evidence="4">
    <location>
        <position position="580"/>
    </location>
</feature>
<feature type="glycosylation site" description="N-linked (GlcNAc...) asparagine" evidence="4">
    <location>
        <position position="619"/>
    </location>
</feature>
<feature type="glycosylation site" description="N-linked (GlcNAc...) asparagine" evidence="4">
    <location>
        <position position="697"/>
    </location>
</feature>
<feature type="disulfide bond" evidence="2">
    <location>
        <begin position="30"/>
        <end position="48"/>
    </location>
</feature>
<feature type="disulfide bond" evidence="2">
    <location>
        <begin position="38"/>
        <end position="456"/>
    </location>
</feature>
<feature type="disulfide bond" evidence="2">
    <location>
        <begin position="41"/>
        <end position="61"/>
    </location>
</feature>
<feature type="disulfide bond" evidence="2">
    <location>
        <begin position="51"/>
        <end position="72"/>
    </location>
</feature>
<feature type="disulfide bond" evidence="2">
    <location>
        <begin position="245"/>
        <end position="288"/>
    </location>
</feature>
<feature type="disulfide bond" evidence="6">
    <location>
        <begin position="458"/>
        <end position="477"/>
    </location>
</feature>
<feature type="disulfide bond" evidence="6">
    <location>
        <begin position="469"/>
        <end position="480"/>
    </location>
</feature>
<feature type="disulfide bond" evidence="6">
    <location>
        <begin position="482"/>
        <end position="491"/>
    </location>
</feature>
<feature type="disulfide bond" evidence="6">
    <location>
        <begin position="493"/>
        <end position="521"/>
    </location>
</feature>
<feature type="disulfide bond" evidence="6">
    <location>
        <begin position="504"/>
        <end position="519"/>
    </location>
</feature>
<feature type="disulfide bond" evidence="6">
    <location>
        <begin position="513"/>
        <end position="524"/>
    </location>
</feature>
<feature type="disulfide bond" evidence="6">
    <location>
        <begin position="526"/>
        <end position="537"/>
    </location>
</feature>
<feature type="disulfide bond" evidence="6">
    <location>
        <begin position="544"/>
        <end position="558"/>
    </location>
</feature>
<feature type="disulfide bond" evidence="6">
    <location>
        <begin position="552"/>
        <end position="563"/>
    </location>
</feature>
<feature type="disulfide bond" evidence="6">
    <location>
        <begin position="565"/>
        <end position="574"/>
    </location>
</feature>
<feature type="disulfide bond" evidence="6">
    <location>
        <begin position="576"/>
        <end position="599"/>
    </location>
</feature>
<feature type="disulfide bond" evidence="6">
    <location>
        <begin position="583"/>
        <end position="597"/>
    </location>
</feature>
<feature type="disulfide bond" evidence="6">
    <location>
        <begin position="591"/>
        <end position="602"/>
    </location>
</feature>
<feature type="disulfide bond" evidence="6">
    <location>
        <begin position="604"/>
        <end position="616"/>
    </location>
</feature>
<feature type="disulfide bond" evidence="2">
    <location>
        <begin position="628"/>
        <end position="673"/>
    </location>
</feature>
<feature type="disulfide bond" evidence="2">
    <location>
        <begin position="634"/>
        <end position="653"/>
    </location>
</feature>
<feature type="disulfide bond" evidence="2">
    <location>
        <begin position="637"/>
        <end position="650"/>
    </location>
</feature>
<feature type="disulfide bond" evidence="2">
    <location>
        <begin position="682"/>
        <end position="708"/>
    </location>
</feature>
<feature type="strand" evidence="10">
    <location>
        <begin position="1519"/>
        <end position="1526"/>
    </location>
</feature>
<feature type="strand" evidence="10">
    <location>
        <begin position="1528"/>
        <end position="1531"/>
    </location>
</feature>
<feature type="strand" evidence="10">
    <location>
        <begin position="1541"/>
        <end position="1550"/>
    </location>
</feature>
<feature type="strand" evidence="10">
    <location>
        <begin position="1557"/>
        <end position="1561"/>
    </location>
</feature>
<feature type="strand" evidence="10">
    <location>
        <begin position="1568"/>
        <end position="1571"/>
    </location>
</feature>
<feature type="strand" evidence="10">
    <location>
        <begin position="1579"/>
        <end position="1588"/>
    </location>
</feature>
<feature type="strand" evidence="10">
    <location>
        <begin position="1596"/>
        <end position="1601"/>
    </location>
</feature>
<accession>Q64632</accession>
<proteinExistence type="evidence at protein level"/>
<keyword id="KW-0002">3D-structure</keyword>
<keyword id="KW-0106">Calcium</keyword>
<keyword id="KW-0130">Cell adhesion</keyword>
<keyword id="KW-0965">Cell junction</keyword>
<keyword id="KW-1003">Cell membrane</keyword>
<keyword id="KW-1015">Disulfide bond</keyword>
<keyword id="KW-0245">EGF-like domain</keyword>
<keyword id="KW-0325">Glycoprotein</keyword>
<keyword id="KW-0401">Integrin</keyword>
<keyword id="KW-0449">Lipoprotein</keyword>
<keyword id="KW-0460">Magnesium</keyword>
<keyword id="KW-0472">Membrane</keyword>
<keyword id="KW-0479">Metal-binding</keyword>
<keyword id="KW-0564">Palmitate</keyword>
<keyword id="KW-0597">Phosphoprotein</keyword>
<keyword id="KW-0675">Receptor</keyword>
<keyword id="KW-1185">Reference proteome</keyword>
<keyword id="KW-0677">Repeat</keyword>
<keyword id="KW-0732">Signal</keyword>
<keyword id="KW-0812">Transmembrane</keyword>
<keyword id="KW-1133">Transmembrane helix</keyword>
<name>ITB4_RAT</name>
<organism>
    <name type="scientific">Rattus norvegicus</name>
    <name type="common">Rat</name>
    <dbReference type="NCBI Taxonomy" id="10116"/>
    <lineage>
        <taxon>Eukaryota</taxon>
        <taxon>Metazoa</taxon>
        <taxon>Chordata</taxon>
        <taxon>Craniata</taxon>
        <taxon>Vertebrata</taxon>
        <taxon>Euteleostomi</taxon>
        <taxon>Mammalia</taxon>
        <taxon>Eutheria</taxon>
        <taxon>Euarchontoglires</taxon>
        <taxon>Glires</taxon>
        <taxon>Rodentia</taxon>
        <taxon>Myomorpha</taxon>
        <taxon>Muroidea</taxon>
        <taxon>Muridae</taxon>
        <taxon>Murinae</taxon>
        <taxon>Rattus</taxon>
    </lineage>
</organism>
<sequence>MAGLCSSPWVKLLLAVVLSAGLPGNMANRCKKAQVKSCTECIRVDKSCAYCTDELFKERRCNTQADVLAAGCRGESVLVMESSLEITENIQIDTSLHRSQVSPQGLQVRLRPGEERNFVFKVFEPLESPVDLYILMDFSNSMSDDLDNLKQMGQNLAKILRQLTSDYTIGFGKFVDKVSVPQTDMRPEKLKEPWPNSDPPFSFKNVISLTENVEEFWDKLQGERISGNLDAPEGGFDAILQTAVCTRDIGWRADSTHLLVFSTESAFHYEADGANVLAGIMNRNDEKCHLDATGAYTQYKTQDYPSVPTLVRLLAKHNIIPIFAVTNYSYSYYEKLHKYFPVSSLGVLQEDSSNIVELLEEAFYRIRSNLDIRALDSPRGLRTEVTSDTLQKTETGSFHIKRGEVGTYNVHLRAVEDIDGTHVCQLAKEDQRGNIHLKPSFSDGLRMDASVICDMCACELQKEVQSARCHYRGDFMCGHCVCNEGWSGKTCNCSTGSLSDTQPCLREGEDKPCSGHGECQCGRCVCYGEGRYEGHFCEYDNFQCPRTSGFLCNDRGRCSMGECVCEPGWTGRSCDCPLSNATCIDSNGGICNGLGFCECGRCHCNQRSSLYTDTTCEINYSAIRLGLCEDLRSCVQCQAWGTGEKKGRTCEECNFKVKMVDELKKAEEVVEYCSFRDEDDDCTYSYTVEGDGSPGPNSTVLVHKKKDCLPAPSWWLIPLLIFLLLLLVLLLLLCWKYCACCKACLGLLPCCNQGHMVGFKEDHYMLRENLMASDHLDTPMLRSGNLKGRDTVRWKITNNVQRPGFATHAASISPTELVPYGLSLRLGRLCTENLMKPGTRECDQLRQEVEENLNEVYRQVNGVHKLQQTKFRQQPNAGKKQDHTIVDTVLLAPRSAKQSLLKLTEKQVEQGSFHELKVAPGYYTLTAEQDARGMVEFQEGVELVDVRVPLFIRPEDDDEKQLLVEAIDVPVGTATLGRRLVNITIIKEQASGIVSFEQPEYSVSRGDQVARIPVIRHILDNGKSQVSYSTQDNTAHGHRDYVPVEGELLFYPGETWKELQVKLLELQEVDSLLRGRQVRRFQVQLSNPKFGARLGQPNTATVIIGEQDETDRSLINEISASPPLPRGDLGAPQNPNAKAAGSRKIHFNWLPPPGKPMGYRVKYWVQGDSESEAHLLDSKVPSVELTNLYPYCDYEMKVCAYGAHGEGPYSSLVSCRTHQEVPSEPGRLAFNVVSSTVTQLSWAEPAETNGEITAYEVCYGLVNEDNRPIGPMKKVLVDNPKNRMLLIENLRESQPYRYTVKARNGAGWGPEREAIINLATQPKRPMSIPIIPDIPIVDAQGGEDYENFLMYSDDVLRSPASSQRPSVSDDTEHLVNGRMDFAYPGSANSLHRMTAANVAYGTHLSPHQTHRMLSTSSTLTRDYHSLTRTDHSQSGTLPRDYSTLTSLSSQGLPPIWEDGRSRLPLSWTLGSWSRAQMKGVPASRGSPDSIILAGQSAAPSWGTDSRGAMGVPDTPTRLVFSALGPTSLKVSWQEPQCDRALLGYSVEYQLLNGGEMHRLNIPNPGQTSVVVEDLLPNHSYVFRVRAQSQEGWGREREGVITIESQVHPQSPLCPLPGSAFTLSTPSAPGPLVFTALSPDSLQLSWERPRRPNGDILGYLVTCEMAQGGGPARTFRVDGDNPESRLTVPGLSENVPYKFKVQARTTEGFGPEREGIITIESQDGGPFPQLGSHSGLFQNPLQSEYSTVTSTHSTTTTEPFLIDGLTLGTQRLEAGGSLTRHVTQEFVSRTLTTSGSLSTHMDQQFFQT</sequence>
<evidence type="ECO:0000250" key="1"/>
<evidence type="ECO:0000250" key="2">
    <source>
        <dbReference type="UniProtKB" id="P05106"/>
    </source>
</evidence>
<evidence type="ECO:0000250" key="3">
    <source>
        <dbReference type="UniProtKB" id="P16144"/>
    </source>
</evidence>
<evidence type="ECO:0000255" key="4"/>
<evidence type="ECO:0000255" key="5">
    <source>
        <dbReference type="PROSITE-ProRule" id="PRU00316"/>
    </source>
</evidence>
<evidence type="ECO:0000255" key="6">
    <source>
        <dbReference type="PROSITE-ProRule" id="PRU01392"/>
    </source>
</evidence>
<evidence type="ECO:0000256" key="7">
    <source>
        <dbReference type="SAM" id="MobiDB-lite"/>
    </source>
</evidence>
<evidence type="ECO:0000305" key="8"/>
<evidence type="ECO:0007744" key="9">
    <source>
    </source>
</evidence>
<evidence type="ECO:0007829" key="10">
    <source>
        <dbReference type="PDB" id="6HYF"/>
    </source>
</evidence>
<comment type="function">
    <text evidence="3">Integrin alpha-6/beta-4 is a receptor for laminin. It plays a critical structural role in the hemidesmosome of epithelial cells. Is required for the regulation of keratinocyte polarity and motility. ITGA6:ITGB4 binds to NRG1 (via EGF domain) and this binding is essential for NRG1-ERBB signaling. ITGA6:ITGB4 binds to IGF1 and this binding is essential for IGF1 signaling. ITGA6:ITGB4 binds to IGF2 and this binding is essential for IGF2 signaling.</text>
</comment>
<comment type="subunit">
    <text evidence="3">Heterodimer of an alpha and a beta subunit. Beta-4 associates with alpha-6. Interacts (via cytoplasmic region) with COL17A1 (via cytoplasmic region). Interacts (via cytoplasmic region) with DST isoform 3 (via N-terminus). Interacts (via cytoplasmic domain) with DST (via N-terminus). Interacts with RAC1. ITGA6:ITGB4 is found in a ternary complex with NRG1 and ERBB3. ITGA6:ITGB4 is found in a ternary complex with IGF1 and IGF1R. ITGA6:ITGB4 interacts with IGF2 (By similarity). Interacts with TMEM268; this interaction prevents ITGB4 degradation (By similarity).</text>
</comment>
<comment type="subcellular location">
    <subcellularLocation>
        <location evidence="1">Cell membrane</location>
        <topology evidence="1">Single-pass type I membrane protein</topology>
    </subcellularLocation>
    <subcellularLocation>
        <location evidence="1">Cell membrane</location>
        <topology evidence="1">Lipid-anchor</topology>
    </subcellularLocation>
    <subcellularLocation>
        <location evidence="1">Cell junction</location>
        <location evidence="1">Hemidesmosome</location>
    </subcellularLocation>
    <text evidence="1">Colocalizes with DST at the leading edge of migrating keratinocytes.</text>
</comment>
<comment type="domain">
    <text>The fibronectin type-III-like domains bind BPAG1 and plectin and probably also recruit BP230.</text>
</comment>
<comment type="domain">
    <text evidence="2">The VWFA domain (or beta I domain) contains three cation-binding sites: the ligand-associated metal ion-binding site (LIMBS or SyMBS), the metal ion-dependent adhesion site (MIDAS), and the adjacent MIDAS site (ADMIDAS). This domain is also part of the ligand-binding site.</text>
</comment>
<comment type="PTM">
    <text evidence="3">Palmitoylated by DHHC3 at several cysteines of the membrane-proximal region, enhancing stability and cell surface expression. Palmitoylation also promotes secondary association with tertaspanins (By similarity).</text>
</comment>
<comment type="similarity">
    <text evidence="8">Belongs to the integrin beta chain family.</text>
</comment>